<keyword id="KW-0131">Cell cycle</keyword>
<keyword id="KW-0132">Cell division</keyword>
<keyword id="KW-0133">Cell shape</keyword>
<keyword id="KW-0961">Cell wall biogenesis/degradation</keyword>
<keyword id="KW-0963">Cytoplasm</keyword>
<keyword id="KW-0573">Peptidoglycan synthesis</keyword>
<keyword id="KW-0808">Transferase</keyword>
<reference key="1">
    <citation type="journal article" date="2000" name="Nucleic Acids Res.">
        <title>Genome sequences of Chlamydia trachomatis MoPn and Chlamydia pneumoniae AR39.</title>
        <authorList>
            <person name="Read T.D."/>
            <person name="Brunham R.C."/>
            <person name="Shen C."/>
            <person name="Gill S.R."/>
            <person name="Heidelberg J.F."/>
            <person name="White O."/>
            <person name="Hickey E.K."/>
            <person name="Peterson J.D."/>
            <person name="Utterback T.R."/>
            <person name="Berry K.J."/>
            <person name="Bass S."/>
            <person name="Linher K.D."/>
            <person name="Weidman J.F."/>
            <person name="Khouri H.M."/>
            <person name="Craven B."/>
            <person name="Bowman C."/>
            <person name="Dodson R.J."/>
            <person name="Gwinn M.L."/>
            <person name="Nelson W.C."/>
            <person name="DeBoy R.T."/>
            <person name="Kolonay J.F."/>
            <person name="McClarty G."/>
            <person name="Salzberg S.L."/>
            <person name="Eisen J.A."/>
            <person name="Fraser C.M."/>
        </authorList>
    </citation>
    <scope>NUCLEOTIDE SEQUENCE [LARGE SCALE GENOMIC DNA]</scope>
    <source>
        <strain>MoPn / Nigg</strain>
    </source>
</reference>
<dbReference type="EC" id="2.5.1.7" evidence="1"/>
<dbReference type="EMBL" id="AE002160">
    <property type="protein sequence ID" value="AAF39549.1"/>
    <property type="molecule type" value="Genomic_DNA"/>
</dbReference>
<dbReference type="PIR" id="G81670">
    <property type="entry name" value="G81670"/>
</dbReference>
<dbReference type="RefSeq" id="WP_010231392.1">
    <property type="nucleotide sequence ID" value="NZ_CP063055.1"/>
</dbReference>
<dbReference type="SMR" id="Q9PJT7"/>
<dbReference type="GeneID" id="1246103"/>
<dbReference type="KEGG" id="cmu:TC_0740"/>
<dbReference type="eggNOG" id="COG0766">
    <property type="taxonomic scope" value="Bacteria"/>
</dbReference>
<dbReference type="HOGENOM" id="CLU_027387_0_0_0"/>
<dbReference type="OrthoDB" id="9803760at2"/>
<dbReference type="UniPathway" id="UPA00219"/>
<dbReference type="Proteomes" id="UP000000800">
    <property type="component" value="Chromosome"/>
</dbReference>
<dbReference type="GO" id="GO:0005737">
    <property type="term" value="C:cytoplasm"/>
    <property type="evidence" value="ECO:0007669"/>
    <property type="project" value="UniProtKB-SubCell"/>
</dbReference>
<dbReference type="GO" id="GO:0008760">
    <property type="term" value="F:UDP-N-acetylglucosamine 1-carboxyvinyltransferase activity"/>
    <property type="evidence" value="ECO:0007669"/>
    <property type="project" value="UniProtKB-UniRule"/>
</dbReference>
<dbReference type="GO" id="GO:0051301">
    <property type="term" value="P:cell division"/>
    <property type="evidence" value="ECO:0007669"/>
    <property type="project" value="UniProtKB-KW"/>
</dbReference>
<dbReference type="GO" id="GO:0071555">
    <property type="term" value="P:cell wall organization"/>
    <property type="evidence" value="ECO:0007669"/>
    <property type="project" value="UniProtKB-KW"/>
</dbReference>
<dbReference type="GO" id="GO:0009252">
    <property type="term" value="P:peptidoglycan biosynthetic process"/>
    <property type="evidence" value="ECO:0007669"/>
    <property type="project" value="UniProtKB-UniRule"/>
</dbReference>
<dbReference type="GO" id="GO:0008360">
    <property type="term" value="P:regulation of cell shape"/>
    <property type="evidence" value="ECO:0007669"/>
    <property type="project" value="UniProtKB-KW"/>
</dbReference>
<dbReference type="GO" id="GO:0019277">
    <property type="term" value="P:UDP-N-acetylgalactosamine biosynthetic process"/>
    <property type="evidence" value="ECO:0007669"/>
    <property type="project" value="InterPro"/>
</dbReference>
<dbReference type="CDD" id="cd01555">
    <property type="entry name" value="UdpNAET"/>
    <property type="match status" value="1"/>
</dbReference>
<dbReference type="Gene3D" id="3.65.10.10">
    <property type="entry name" value="Enolpyruvate transferase domain"/>
    <property type="match status" value="2"/>
</dbReference>
<dbReference type="HAMAP" id="MF_00111">
    <property type="entry name" value="MurA"/>
    <property type="match status" value="1"/>
</dbReference>
<dbReference type="InterPro" id="IPR001986">
    <property type="entry name" value="Enolpyruvate_Tfrase_dom"/>
</dbReference>
<dbReference type="InterPro" id="IPR036968">
    <property type="entry name" value="Enolpyruvate_Tfrase_sf"/>
</dbReference>
<dbReference type="InterPro" id="IPR050068">
    <property type="entry name" value="MurA_subfamily"/>
</dbReference>
<dbReference type="InterPro" id="IPR013792">
    <property type="entry name" value="RNA3'P_cycl/enolpyr_Trfase_a/b"/>
</dbReference>
<dbReference type="InterPro" id="IPR005750">
    <property type="entry name" value="UDP_GlcNAc_COvinyl_MurA"/>
</dbReference>
<dbReference type="NCBIfam" id="TIGR01072">
    <property type="entry name" value="murA"/>
    <property type="match status" value="1"/>
</dbReference>
<dbReference type="NCBIfam" id="NF006873">
    <property type="entry name" value="PRK09369.1"/>
    <property type="match status" value="1"/>
</dbReference>
<dbReference type="PANTHER" id="PTHR43783">
    <property type="entry name" value="UDP-N-ACETYLGLUCOSAMINE 1-CARBOXYVINYLTRANSFERASE"/>
    <property type="match status" value="1"/>
</dbReference>
<dbReference type="PANTHER" id="PTHR43783:SF1">
    <property type="entry name" value="UDP-N-ACETYLGLUCOSAMINE 1-CARBOXYVINYLTRANSFERASE"/>
    <property type="match status" value="1"/>
</dbReference>
<dbReference type="Pfam" id="PF00275">
    <property type="entry name" value="EPSP_synthase"/>
    <property type="match status" value="1"/>
</dbReference>
<dbReference type="SUPFAM" id="SSF55205">
    <property type="entry name" value="EPT/RTPC-like"/>
    <property type="match status" value="1"/>
</dbReference>
<accession>Q9PJT7</accession>
<comment type="function">
    <text evidence="1">Cell wall formation. Adds enolpyruvyl to UDP-N-acetylglucosamine.</text>
</comment>
<comment type="catalytic activity">
    <reaction evidence="1">
        <text>phosphoenolpyruvate + UDP-N-acetyl-alpha-D-glucosamine = UDP-N-acetyl-3-O-(1-carboxyvinyl)-alpha-D-glucosamine + phosphate</text>
        <dbReference type="Rhea" id="RHEA:18681"/>
        <dbReference type="ChEBI" id="CHEBI:43474"/>
        <dbReference type="ChEBI" id="CHEBI:57705"/>
        <dbReference type="ChEBI" id="CHEBI:58702"/>
        <dbReference type="ChEBI" id="CHEBI:68483"/>
        <dbReference type="EC" id="2.5.1.7"/>
    </reaction>
</comment>
<comment type="pathway">
    <text evidence="1">Cell wall biogenesis; peptidoglycan biosynthesis.</text>
</comment>
<comment type="subcellular location">
    <subcellularLocation>
        <location evidence="1">Cytoplasm</location>
    </subcellularLocation>
</comment>
<comment type="similarity">
    <text evidence="1">Belongs to the EPSP synthase family. MurA subfamily.</text>
</comment>
<organism>
    <name type="scientific">Chlamydia muridarum (strain MoPn / Nigg)</name>
    <dbReference type="NCBI Taxonomy" id="243161"/>
    <lineage>
        <taxon>Bacteria</taxon>
        <taxon>Pseudomonadati</taxon>
        <taxon>Chlamydiota</taxon>
        <taxon>Chlamydiia</taxon>
        <taxon>Chlamydiales</taxon>
        <taxon>Chlamydiaceae</taxon>
        <taxon>Chlamydia/Chlamydophila group</taxon>
        <taxon>Chlamydia</taxon>
    </lineage>
</organism>
<name>MURA_CHLMU</name>
<feature type="chain" id="PRO_0000178859" description="UDP-N-acetylglucosamine 1-carboxyvinyltransferase">
    <location>
        <begin position="1"/>
        <end position="442"/>
    </location>
</feature>
<feature type="active site" description="Proton donor" evidence="1">
    <location>
        <position position="119"/>
    </location>
</feature>
<feature type="binding site" evidence="1">
    <location>
        <begin position="22"/>
        <end position="23"/>
    </location>
    <ligand>
        <name>phosphoenolpyruvate</name>
        <dbReference type="ChEBI" id="CHEBI:58702"/>
    </ligand>
</feature>
<feature type="binding site" evidence="1">
    <location>
        <position position="94"/>
    </location>
    <ligand>
        <name>UDP-N-acetyl-alpha-D-glucosamine</name>
        <dbReference type="ChEBI" id="CHEBI:57705"/>
    </ligand>
</feature>
<feature type="binding site" evidence="1">
    <location>
        <position position="309"/>
    </location>
    <ligand>
        <name>UDP-N-acetyl-alpha-D-glucosamine</name>
        <dbReference type="ChEBI" id="CHEBI:57705"/>
    </ligand>
</feature>
<feature type="binding site" evidence="1">
    <location>
        <position position="331"/>
    </location>
    <ligand>
        <name>UDP-N-acetyl-alpha-D-glucosamine</name>
        <dbReference type="ChEBI" id="CHEBI:57705"/>
    </ligand>
</feature>
<proteinExistence type="inferred from homology"/>
<protein>
    <recommendedName>
        <fullName evidence="1">UDP-N-acetylglucosamine 1-carboxyvinyltransferase</fullName>
        <ecNumber evidence="1">2.5.1.7</ecNumber>
    </recommendedName>
    <alternativeName>
        <fullName evidence="1">Enoylpyruvate transferase</fullName>
    </alternativeName>
    <alternativeName>
        <fullName evidence="1">UDP-N-acetylglucosamine enolpyruvyl transferase</fullName>
        <shortName evidence="1">EPT</shortName>
    </alternativeName>
</protein>
<gene>
    <name evidence="1" type="primary">murA</name>
    <name type="ordered locus">TC_0740</name>
</gene>
<evidence type="ECO:0000255" key="1">
    <source>
        <dbReference type="HAMAP-Rule" id="MF_00111"/>
    </source>
</evidence>
<sequence>MPGIKVFGGTVLQGSVRVSGAKNATTKLLVASLLSDKRTILKNVPNIEDVQQTVDLCRALGAIVDWDKQAQVIDIHTPRILLSKVPPQFSCVNRIPILLLGALLRRCPYGIFVPILGGDAIGPRTLHFHLEGLKKLGAEIIVSDEGYWAAAPDGLIGAHITLPYPSVGATENLILASVGAQGRTIIKNAALEVEIIDLIVFLQKAGVEITTDNDKTIEIFGCQDFYSVEHSIIPDKIEAASFGMAAVVSQGRVFVEHARHEHMIPFLKALRSIGGGFSVQENGIEFFYDKPLKGGVLLETDVHPGFITDWQQPFAVLLSQAEGCSVIHETVHENRLGYLSGLAKMGAHCDLFHECLSAKSCRYSTGNHPHSAVIHGPTPLQATHLVIPDLRAGFAYVMAALIAEGGVSKIENTKMLDRGYTDWLGNLERLGAKILTEKTRCV</sequence>